<sequence>MVPVLLILVGALATLQADLLNHKKFLLLPPVNFTIKATGLAQVLLHWDPNPDQEQRHVDLEYHVKINAPQEDEYDTRKTESKCVTPLHEGFAASVRTILKSSHTTLASSWVSAELKAPPGSPGTSVTNLTCTTHTVVSSHTHLRPYQVSLRCTWLVGKDAPEDTQYFLYYRFGVLTEKCQEYSRDALNRNTACWFPRTFINSKGFEQLAVHINGSSKRAAIKPFDQLFSPLAIDQVNPPRNVTVEIESNSLYIQWEKPLSAFPDHCFNYELKIYNTKNGHIQKEKLIANKFISKIDDVSTYSIQVRAAVSSPCRMPGRWGEWSQPIYVGKERKSLVEWHLIVLPTAACFVLLIFSLICRVCHLWTRLFPPVPAPKSNIKDLPVVTEYEKPSNETKIEVVHCVEEVGFEVMGNSTF</sequence>
<dbReference type="EMBL" id="D90205">
    <property type="protein sequence ID" value="BAA14231.1"/>
    <property type="molecule type" value="mRNA"/>
</dbReference>
<dbReference type="CCDS" id="CCDS20396.1"/>
<dbReference type="PIR" id="S12357">
    <property type="entry name" value="S12357"/>
</dbReference>
<dbReference type="RefSeq" id="NP_032396.1">
    <property type="nucleotide sequence ID" value="NM_008370.2"/>
</dbReference>
<dbReference type="RefSeq" id="XP_017176895.1">
    <property type="nucleotide sequence ID" value="XM_017321406.1"/>
</dbReference>
<dbReference type="SMR" id="P21183"/>
<dbReference type="FunCoup" id="P21183">
    <property type="interactions" value="457"/>
</dbReference>
<dbReference type="STRING" id="10090.ENSMUSP00000144718"/>
<dbReference type="BindingDB" id="P21183"/>
<dbReference type="ChEMBL" id="CHEMBL4523198"/>
<dbReference type="DrugCentral" id="P21183"/>
<dbReference type="GlyCosmos" id="P21183">
    <property type="glycosylation" value="4 sites, No reported glycans"/>
</dbReference>
<dbReference type="GlyGen" id="P21183">
    <property type="glycosylation" value="4 sites"/>
</dbReference>
<dbReference type="PhosphoSitePlus" id="P21183"/>
<dbReference type="PaxDb" id="10090-ENSMUSP00000129781"/>
<dbReference type="ProteomicsDB" id="267048"/>
<dbReference type="Antibodypedia" id="2274">
    <property type="antibodies" value="420 antibodies from 36 providers"/>
</dbReference>
<dbReference type="DNASU" id="16192"/>
<dbReference type="Ensembl" id="ENSMUST00000167925.3">
    <property type="protein sequence ID" value="ENSMUSP00000129781.3"/>
    <property type="gene ID" value="ENSMUSG00000005364.12"/>
</dbReference>
<dbReference type="Ensembl" id="ENSMUST00000204659.3">
    <property type="protein sequence ID" value="ENSMUSP00000144718.2"/>
    <property type="gene ID" value="ENSMUSG00000005364.12"/>
</dbReference>
<dbReference type="GeneID" id="16192"/>
<dbReference type="KEGG" id="mmu:16192"/>
<dbReference type="UCSC" id="uc009dcx.1">
    <property type="organism name" value="mouse"/>
</dbReference>
<dbReference type="AGR" id="MGI:96558"/>
<dbReference type="CTD" id="3568"/>
<dbReference type="MGI" id="MGI:96558">
    <property type="gene designation" value="Il5ra"/>
</dbReference>
<dbReference type="VEuPathDB" id="HostDB:ENSMUSG00000005364"/>
<dbReference type="eggNOG" id="ENOG502QZNV">
    <property type="taxonomic scope" value="Eukaryota"/>
</dbReference>
<dbReference type="GeneTree" id="ENSGT00940000160890"/>
<dbReference type="HOGENOM" id="CLU_039945_0_0_1"/>
<dbReference type="InParanoid" id="P21183"/>
<dbReference type="OMA" id="NKFRDPF"/>
<dbReference type="OrthoDB" id="9890439at2759"/>
<dbReference type="PhylomeDB" id="P21183"/>
<dbReference type="TreeFam" id="TF331549"/>
<dbReference type="Reactome" id="R-MMU-512988">
    <property type="pathway name" value="Interleukin-3, Interleukin-5 and GM-CSF signaling"/>
</dbReference>
<dbReference type="Reactome" id="R-MMU-5673001">
    <property type="pathway name" value="RAF/MAP kinase cascade"/>
</dbReference>
<dbReference type="Reactome" id="R-MMU-912526">
    <property type="pathway name" value="Interleukin receptor SHC signaling"/>
</dbReference>
<dbReference type="BioGRID-ORCS" id="16192">
    <property type="hits" value="3 hits in 77 CRISPR screens"/>
</dbReference>
<dbReference type="PRO" id="PR:P21183"/>
<dbReference type="Proteomes" id="UP000000589">
    <property type="component" value="Chromosome 6"/>
</dbReference>
<dbReference type="RNAct" id="P21183">
    <property type="molecule type" value="protein"/>
</dbReference>
<dbReference type="Bgee" id="ENSMUSG00000005364">
    <property type="expression patterns" value="Expressed in right kidney and 12 other cell types or tissues"/>
</dbReference>
<dbReference type="ExpressionAtlas" id="P21183">
    <property type="expression patterns" value="baseline and differential"/>
</dbReference>
<dbReference type="GO" id="GO:0005886">
    <property type="term" value="C:plasma membrane"/>
    <property type="evidence" value="ECO:0007669"/>
    <property type="project" value="Ensembl"/>
</dbReference>
<dbReference type="GO" id="GO:0004914">
    <property type="term" value="F:interleukin-5 receptor activity"/>
    <property type="evidence" value="ECO:0007669"/>
    <property type="project" value="Ensembl"/>
</dbReference>
<dbReference type="GO" id="GO:0002437">
    <property type="term" value="P:inflammatory response to antigenic stimulus"/>
    <property type="evidence" value="ECO:0000315"/>
    <property type="project" value="MGI"/>
</dbReference>
<dbReference type="GO" id="GO:0032674">
    <property type="term" value="P:regulation of interleukin-5 production"/>
    <property type="evidence" value="ECO:0000315"/>
    <property type="project" value="MGI"/>
</dbReference>
<dbReference type="CDD" id="cd00063">
    <property type="entry name" value="FN3"/>
    <property type="match status" value="1"/>
</dbReference>
<dbReference type="FunFam" id="2.60.40.10:FF:000741">
    <property type="entry name" value="Interleukin 5 receptor subunit alpha"/>
    <property type="match status" value="1"/>
</dbReference>
<dbReference type="FunFam" id="2.60.40.10:FF:000755">
    <property type="entry name" value="Interleukin 5 receptor subunit alpha"/>
    <property type="match status" value="1"/>
</dbReference>
<dbReference type="FunFam" id="2.60.40.10:FF:000818">
    <property type="entry name" value="Interleukin 5 receptor subunit alpha"/>
    <property type="match status" value="1"/>
</dbReference>
<dbReference type="Gene3D" id="2.60.40.10">
    <property type="entry name" value="Immunoglobulins"/>
    <property type="match status" value="3"/>
</dbReference>
<dbReference type="InterPro" id="IPR003961">
    <property type="entry name" value="FN3_dom"/>
</dbReference>
<dbReference type="InterPro" id="IPR036116">
    <property type="entry name" value="FN3_sf"/>
</dbReference>
<dbReference type="InterPro" id="IPR013783">
    <property type="entry name" value="Ig-like_fold"/>
</dbReference>
<dbReference type="InterPro" id="IPR003532">
    <property type="entry name" value="Short_hematopoietin_rcpt_2_CS"/>
</dbReference>
<dbReference type="InterPro" id="IPR015321">
    <property type="entry name" value="TypeI_recpt_CBD"/>
</dbReference>
<dbReference type="PANTHER" id="PTHR23037">
    <property type="entry name" value="CYTOKINE RECEPTOR"/>
    <property type="match status" value="1"/>
</dbReference>
<dbReference type="PANTHER" id="PTHR23037:SF46">
    <property type="entry name" value="INTERLEUKIN 5 RECEPTOR SUBUNIT ALPHA"/>
    <property type="match status" value="1"/>
</dbReference>
<dbReference type="Pfam" id="PF09240">
    <property type="entry name" value="IL6Ra-bind"/>
    <property type="match status" value="1"/>
</dbReference>
<dbReference type="SUPFAM" id="SSF49265">
    <property type="entry name" value="Fibronectin type III"/>
    <property type="match status" value="2"/>
</dbReference>
<dbReference type="PROSITE" id="PS50853">
    <property type="entry name" value="FN3"/>
    <property type="match status" value="2"/>
</dbReference>
<dbReference type="PROSITE" id="PS01356">
    <property type="entry name" value="HEMATOPO_REC_S_F2"/>
    <property type="match status" value="1"/>
</dbReference>
<comment type="function">
    <text evidence="2 5">Cell surface receptor that plays an important role in the survival, differentiation, and chemotaxis of eosinophils (PubMed:1873482). Acts by forming a heterodimeric receptor with CSF2RB subunit and subsequently binding to interleukin-5. In unstimulated conditions, interacts constitutively with JAK2. Heterodimeric receptor activation leads to JAK2 stimulation and subsequent activation of the JAK-STAT pathway.</text>
</comment>
<comment type="subunit">
    <text evidence="2 5">Interacts with IL5 (PubMed:1873482). Interacts with CSF2RB. Interacts with JAK2. Interacts with SDCBP.</text>
</comment>
<comment type="subcellular location">
    <subcellularLocation>
        <location>Membrane</location>
        <topology>Single-pass type I membrane protein</topology>
    </subcellularLocation>
</comment>
<comment type="tissue specificity">
    <text>Expressed on eosinophils and basophils. Also on B-cells.</text>
</comment>
<comment type="domain">
    <text>The WSXWS motif appears to be necessary for proper protein folding and thereby efficient intracellular transport and cell-surface receptor binding.</text>
</comment>
<comment type="domain">
    <text>The box 1 motif is required for JAK interaction and/or activation.</text>
</comment>
<evidence type="ECO:0000250" key="1"/>
<evidence type="ECO:0000250" key="2">
    <source>
        <dbReference type="UniProtKB" id="Q01344"/>
    </source>
</evidence>
<evidence type="ECO:0000255" key="3"/>
<evidence type="ECO:0000255" key="4">
    <source>
        <dbReference type="PROSITE-ProRule" id="PRU00316"/>
    </source>
</evidence>
<evidence type="ECO:0000269" key="5">
    <source>
    </source>
</evidence>
<gene>
    <name type="primary">Il5ra</name>
    <name type="synonym">Il5r</name>
</gene>
<feature type="signal peptide">
    <location>
        <begin position="1"/>
        <end position="17"/>
    </location>
</feature>
<feature type="chain" id="PRO_0000010894" description="Interleukin-5 receptor subunit alpha">
    <location>
        <begin position="18"/>
        <end position="415"/>
    </location>
</feature>
<feature type="topological domain" description="Extracellular" evidence="3">
    <location>
        <begin position="18"/>
        <end position="339"/>
    </location>
</feature>
<feature type="transmembrane region" description="Helical" evidence="3">
    <location>
        <begin position="340"/>
        <end position="361"/>
    </location>
</feature>
<feature type="topological domain" description="Cytoplasmic" evidence="3">
    <location>
        <begin position="362"/>
        <end position="415"/>
    </location>
</feature>
<feature type="domain" description="Fibronectin type-III 1" evidence="4">
    <location>
        <begin position="29"/>
        <end position="120"/>
    </location>
</feature>
<feature type="domain" description="Fibronectin type-III 2" evidence="4">
    <location>
        <begin position="238"/>
        <end position="331"/>
    </location>
</feature>
<feature type="short sequence motif" description="WSXWS motif">
    <location>
        <begin position="319"/>
        <end position="323"/>
    </location>
</feature>
<feature type="short sequence motif" description="Box 1 motif">
    <location>
        <begin position="367"/>
        <end position="375"/>
    </location>
</feature>
<feature type="glycosylation site" description="N-linked (GlcNAc...) asparagine" evidence="3">
    <location>
        <position position="32"/>
    </location>
</feature>
<feature type="glycosylation site" description="N-linked (GlcNAc...) asparagine" evidence="3">
    <location>
        <position position="128"/>
    </location>
</feature>
<feature type="glycosylation site" description="N-linked (GlcNAc...) asparagine" evidence="3">
    <location>
        <position position="213"/>
    </location>
</feature>
<feature type="glycosylation site" description="N-linked (GlcNAc...) asparagine" evidence="3">
    <location>
        <position position="241"/>
    </location>
</feature>
<feature type="disulfide bond" evidence="1">
    <location>
        <begin position="131"/>
        <end position="152"/>
    </location>
</feature>
<feature type="disulfide bond" evidence="1">
    <location>
        <begin position="179"/>
        <end position="193"/>
    </location>
</feature>
<feature type="disulfide bond" evidence="1">
    <location>
        <begin position="266"/>
        <end position="313"/>
    </location>
</feature>
<name>IL5RA_MOUSE</name>
<protein>
    <recommendedName>
        <fullName>Interleukin-5 receptor subunit alpha</fullName>
        <shortName>IL-5 receptor subunit alpha</shortName>
        <shortName>IL-5R subunit alpha</shortName>
        <shortName>IL-5R-alpha</shortName>
        <shortName>IL-5RA</shortName>
    </recommendedName>
    <cdAntigenName>CD125</cdAntigenName>
</protein>
<organism>
    <name type="scientific">Mus musculus</name>
    <name type="common">Mouse</name>
    <dbReference type="NCBI Taxonomy" id="10090"/>
    <lineage>
        <taxon>Eukaryota</taxon>
        <taxon>Metazoa</taxon>
        <taxon>Chordata</taxon>
        <taxon>Craniata</taxon>
        <taxon>Vertebrata</taxon>
        <taxon>Euteleostomi</taxon>
        <taxon>Mammalia</taxon>
        <taxon>Eutheria</taxon>
        <taxon>Euarchontoglires</taxon>
        <taxon>Glires</taxon>
        <taxon>Rodentia</taxon>
        <taxon>Myomorpha</taxon>
        <taxon>Muroidea</taxon>
        <taxon>Muridae</taxon>
        <taxon>Murinae</taxon>
        <taxon>Mus</taxon>
        <taxon>Mus</taxon>
    </lineage>
</organism>
<proteinExistence type="evidence at protein level"/>
<reference key="1">
    <citation type="journal article" date="1990" name="EMBO J.">
        <title>Molecular cloning and expression of the murine interleukin-5 receptor.</title>
        <authorList>
            <person name="Takaki S."/>
            <person name="Tominaga A."/>
            <person name="Mita S."/>
            <person name="Sonoda E."/>
            <person name="Yamaguchi N."/>
            <person name="Takatsu K."/>
        </authorList>
    </citation>
    <scope>NUCLEOTIDE SEQUENCE [MRNA]</scope>
</reference>
<reference key="2">
    <citation type="journal article" date="1991" name="Cytokine">
        <title>Analysis of interleukin 5 receptors on murine eosinophils: a comparison with receptors on B13 cells.</title>
        <authorList>
            <person name="Barry S.C."/>
            <person name="McKenzie A.N."/>
            <person name="Strath M."/>
            <person name="Sanderson C.J."/>
        </authorList>
    </citation>
    <scope>FUNCTION</scope>
    <scope>INTERACTION WITH IL5</scope>
</reference>
<accession>P21183</accession>
<keyword id="KW-1015">Disulfide bond</keyword>
<keyword id="KW-0325">Glycoprotein</keyword>
<keyword id="KW-0472">Membrane</keyword>
<keyword id="KW-0675">Receptor</keyword>
<keyword id="KW-1185">Reference proteome</keyword>
<keyword id="KW-0677">Repeat</keyword>
<keyword id="KW-0732">Signal</keyword>
<keyword id="KW-0812">Transmembrane</keyword>
<keyword id="KW-1133">Transmembrane helix</keyword>